<dbReference type="EC" id="3.6.5.-" evidence="2"/>
<dbReference type="EMBL" id="L24548">
    <property type="protein sequence ID" value="AAA65066.1"/>
    <property type="molecule type" value="mRNA"/>
</dbReference>
<dbReference type="PIR" id="I50237">
    <property type="entry name" value="I50237"/>
</dbReference>
<dbReference type="RefSeq" id="NP_990734.1">
    <property type="nucleotide sequence ID" value="NM_205403.1"/>
</dbReference>
<dbReference type="SMR" id="P50146"/>
<dbReference type="FunCoup" id="P50146">
    <property type="interactions" value="1362"/>
</dbReference>
<dbReference type="STRING" id="9031.ENSGALP00000044195"/>
<dbReference type="PaxDb" id="9031-ENSGALP00000013640"/>
<dbReference type="GeneID" id="396368"/>
<dbReference type="KEGG" id="gga:396368"/>
<dbReference type="CTD" id="2770"/>
<dbReference type="VEuPathDB" id="HostDB:geneid_396368"/>
<dbReference type="eggNOG" id="KOG0082">
    <property type="taxonomic scope" value="Eukaryota"/>
</dbReference>
<dbReference type="InParanoid" id="P50146"/>
<dbReference type="OrthoDB" id="5817230at2759"/>
<dbReference type="PhylomeDB" id="P50146"/>
<dbReference type="PRO" id="PR:P50146"/>
<dbReference type="Proteomes" id="UP000000539">
    <property type="component" value="Unassembled WGS sequence"/>
</dbReference>
<dbReference type="GO" id="GO:0005938">
    <property type="term" value="C:cell cortex"/>
    <property type="evidence" value="ECO:0000250"/>
    <property type="project" value="UniProtKB"/>
</dbReference>
<dbReference type="GO" id="GO:0005813">
    <property type="term" value="C:centrosome"/>
    <property type="evidence" value="ECO:0000250"/>
    <property type="project" value="UniProtKB"/>
</dbReference>
<dbReference type="GO" id="GO:0005737">
    <property type="term" value="C:cytoplasm"/>
    <property type="evidence" value="ECO:0000250"/>
    <property type="project" value="UniProtKB"/>
</dbReference>
<dbReference type="GO" id="GO:0005834">
    <property type="term" value="C:heterotrimeric G-protein complex"/>
    <property type="evidence" value="ECO:0000318"/>
    <property type="project" value="GO_Central"/>
</dbReference>
<dbReference type="GO" id="GO:0030496">
    <property type="term" value="C:midbody"/>
    <property type="evidence" value="ECO:0000250"/>
    <property type="project" value="UniProtKB"/>
</dbReference>
<dbReference type="GO" id="GO:0005634">
    <property type="term" value="C:nucleus"/>
    <property type="evidence" value="ECO:0007669"/>
    <property type="project" value="UniProtKB-SubCell"/>
</dbReference>
<dbReference type="GO" id="GO:0005886">
    <property type="term" value="C:plasma membrane"/>
    <property type="evidence" value="ECO:0000250"/>
    <property type="project" value="UniProtKB"/>
</dbReference>
<dbReference type="GO" id="GO:0001664">
    <property type="term" value="F:G protein-coupled receptor binding"/>
    <property type="evidence" value="ECO:0000250"/>
    <property type="project" value="UniProtKB"/>
</dbReference>
<dbReference type="GO" id="GO:0031821">
    <property type="term" value="F:G protein-coupled serotonin receptor binding"/>
    <property type="evidence" value="ECO:0000318"/>
    <property type="project" value="GO_Central"/>
</dbReference>
<dbReference type="GO" id="GO:0031683">
    <property type="term" value="F:G-protein beta/gamma-subunit complex binding"/>
    <property type="evidence" value="ECO:0000318"/>
    <property type="project" value="GO_Central"/>
</dbReference>
<dbReference type="GO" id="GO:0019003">
    <property type="term" value="F:GDP binding"/>
    <property type="evidence" value="ECO:0000250"/>
    <property type="project" value="UniProtKB"/>
</dbReference>
<dbReference type="GO" id="GO:0005525">
    <property type="term" value="F:GTP binding"/>
    <property type="evidence" value="ECO:0000250"/>
    <property type="project" value="UniProtKB"/>
</dbReference>
<dbReference type="GO" id="GO:0003924">
    <property type="term" value="F:GTPase activity"/>
    <property type="evidence" value="ECO:0000250"/>
    <property type="project" value="UniProtKB"/>
</dbReference>
<dbReference type="GO" id="GO:0000287">
    <property type="term" value="F:magnesium ion binding"/>
    <property type="evidence" value="ECO:0000250"/>
    <property type="project" value="UniProtKB"/>
</dbReference>
<dbReference type="GO" id="GO:0007188">
    <property type="term" value="P:adenylate cyclase-modulating G protein-coupled receptor signaling pathway"/>
    <property type="evidence" value="ECO:0000250"/>
    <property type="project" value="UniProtKB"/>
</dbReference>
<dbReference type="GO" id="GO:0051301">
    <property type="term" value="P:cell division"/>
    <property type="evidence" value="ECO:0000250"/>
    <property type="project" value="UniProtKB"/>
</dbReference>
<dbReference type="GO" id="GO:1904322">
    <property type="term" value="P:cellular response to forskolin"/>
    <property type="evidence" value="ECO:0000250"/>
    <property type="project" value="UniProtKB"/>
</dbReference>
<dbReference type="GO" id="GO:0007186">
    <property type="term" value="P:G protein-coupled receptor signaling pathway"/>
    <property type="evidence" value="ECO:0000250"/>
    <property type="project" value="AgBase"/>
</dbReference>
<dbReference type="GO" id="GO:0050805">
    <property type="term" value="P:negative regulation of synaptic transmission"/>
    <property type="evidence" value="ECO:0000250"/>
    <property type="project" value="AgBase"/>
</dbReference>
<dbReference type="GO" id="GO:1904778">
    <property type="term" value="P:positive regulation of protein localization to cell cortex"/>
    <property type="evidence" value="ECO:0000250"/>
    <property type="project" value="UniProtKB"/>
</dbReference>
<dbReference type="GO" id="GO:0060236">
    <property type="term" value="P:regulation of mitotic spindle organization"/>
    <property type="evidence" value="ECO:0000250"/>
    <property type="project" value="UniProtKB"/>
</dbReference>
<dbReference type="CDD" id="cd00066">
    <property type="entry name" value="G-alpha"/>
    <property type="match status" value="1"/>
</dbReference>
<dbReference type="FunFam" id="1.10.400.10:FF:000001">
    <property type="entry name" value="Guanine nucleotide-binding protein G(I) subunit alpha"/>
    <property type="match status" value="1"/>
</dbReference>
<dbReference type="FunFam" id="3.40.50.300:FF:002487">
    <property type="entry name" value="Guanine nucleotide-binding protein G(i) subunit alpha-1"/>
    <property type="match status" value="1"/>
</dbReference>
<dbReference type="FunFam" id="3.40.50.300:FF:003559">
    <property type="entry name" value="Guanine nucleotide-binding protein G(i) subunit alpha-1"/>
    <property type="match status" value="1"/>
</dbReference>
<dbReference type="Gene3D" id="1.10.400.10">
    <property type="entry name" value="GI Alpha 1, domain 2-like"/>
    <property type="match status" value="1"/>
</dbReference>
<dbReference type="Gene3D" id="3.40.50.300">
    <property type="entry name" value="P-loop containing nucleotide triphosphate hydrolases"/>
    <property type="match status" value="1"/>
</dbReference>
<dbReference type="InterPro" id="IPR001408">
    <property type="entry name" value="Gprotein_alpha_I"/>
</dbReference>
<dbReference type="InterPro" id="IPR001019">
    <property type="entry name" value="Gprotein_alpha_su"/>
</dbReference>
<dbReference type="InterPro" id="IPR011025">
    <property type="entry name" value="GproteinA_insert"/>
</dbReference>
<dbReference type="InterPro" id="IPR027417">
    <property type="entry name" value="P-loop_NTPase"/>
</dbReference>
<dbReference type="PANTHER" id="PTHR10218">
    <property type="entry name" value="GTP-BINDING PROTEIN ALPHA SUBUNIT"/>
    <property type="match status" value="1"/>
</dbReference>
<dbReference type="PANTHER" id="PTHR10218:SF359">
    <property type="entry name" value="GUANINE NUCLEOTIDE-BINDING PROTEIN G(I) SUBUNIT ALPHA-1"/>
    <property type="match status" value="1"/>
</dbReference>
<dbReference type="Pfam" id="PF00503">
    <property type="entry name" value="G-alpha"/>
    <property type="match status" value="1"/>
</dbReference>
<dbReference type="PRINTS" id="PR00318">
    <property type="entry name" value="GPROTEINA"/>
</dbReference>
<dbReference type="PRINTS" id="PR00441">
    <property type="entry name" value="GPROTEINAI"/>
</dbReference>
<dbReference type="SMART" id="SM00275">
    <property type="entry name" value="G_alpha"/>
    <property type="match status" value="1"/>
</dbReference>
<dbReference type="SUPFAM" id="SSF52540">
    <property type="entry name" value="P-loop containing nucleoside triphosphate hydrolases"/>
    <property type="match status" value="1"/>
</dbReference>
<dbReference type="SUPFAM" id="SSF47895">
    <property type="entry name" value="Transducin (alpha subunit), insertion domain"/>
    <property type="match status" value="1"/>
</dbReference>
<dbReference type="PROSITE" id="PS51882">
    <property type="entry name" value="G_ALPHA"/>
    <property type="match status" value="1"/>
</dbReference>
<comment type="function">
    <text evidence="1 2">Guanine nucleotide-binding proteins (G proteins) function as transducers downstream of G protein-coupled receptors (GPCRs) in numerous signaling cascades. The alpha chain contains the guanine nucleotide binding site and alternates between an active, GTP-bound state and an inactive, GDP-bound state. Signaling by an activated GPCR promotes GDP release and GTP binding. The alpha subunit has a low GTPase activity that converts bound GTP to GDP, thereby terminating the signal. Both GDP release and GTP hydrolysis are modulated by numerous regulatory proteins (By similarity). Signaling is mediated via effector proteins, such as adenylate cyclase. Inhibits adenylate cyclase activity of ADCY1, ADCY5 and ADCY6, leading to decreased intracellular cAMP levels (By similarity). Required for cortical dynein-dynactin complex recruitment during metaphase (By similarity).</text>
</comment>
<comment type="catalytic activity">
    <reaction evidence="2">
        <text>GTP + H2O = GDP + phosphate + H(+)</text>
        <dbReference type="Rhea" id="RHEA:19669"/>
        <dbReference type="ChEBI" id="CHEBI:15377"/>
        <dbReference type="ChEBI" id="CHEBI:15378"/>
        <dbReference type="ChEBI" id="CHEBI:37565"/>
        <dbReference type="ChEBI" id="CHEBI:43474"/>
        <dbReference type="ChEBI" id="CHEBI:58189"/>
    </reaction>
    <physiologicalReaction direction="left-to-right" evidence="2">
        <dbReference type="Rhea" id="RHEA:19670"/>
    </physiologicalReaction>
</comment>
<comment type="subunit">
    <text evidence="1 2">Heterotrimeric G proteins are composed of 3 units; alpha, beta and gamma. The alpha chain contains the guanine nucleotide binding site. Part of a spindle orientation complex. Identified in complex with the beta subunit GNB1 and the gamma subunit GNG1. Identified in complex with the beta subunit GNB1 and the gamma subunit GNG2. GTP binding causes dissociation of the heterotrimer, liberating the individual subunits so that they can interact with downstream effector proteins (By similarity).</text>
</comment>
<comment type="subcellular location">
    <subcellularLocation>
        <location evidence="1">Nucleus</location>
    </subcellularLocation>
    <subcellularLocation>
        <location evidence="1">Cytoplasm</location>
    </subcellularLocation>
    <subcellularLocation>
        <location evidence="1">Cell membrane</location>
        <topology evidence="1">Peripheral membrane protein</topology>
        <orientation evidence="1">Cytoplasmic side</orientation>
    </subcellularLocation>
    <subcellularLocation>
        <location evidence="1">Cytoplasm</location>
        <location evidence="1">Cytoskeleton</location>
        <location evidence="1">Microtubule organizing center</location>
        <location evidence="1">Centrosome</location>
    </subcellularLocation>
    <subcellularLocation>
        <location evidence="2">Cytoplasm</location>
        <location evidence="2">Cell cortex</location>
    </subcellularLocation>
    <subcellularLocation>
        <location evidence="1">Membrane</location>
        <topology evidence="1">Lipid-anchor</topology>
    </subcellularLocation>
</comment>
<comment type="PTM">
    <text evidence="1">Myristoylation at Gly-2 is required for membrane anchoring before palmitoylation.</text>
</comment>
<comment type="PTM">
    <text evidence="1">Palmitoylation at Cys-3 varies with membrane lipid composition.</text>
</comment>
<comment type="similarity">
    <text evidence="4">Belongs to the G-alpha family. G(i/o/t/z) subfamily.</text>
</comment>
<accession>P50146</accession>
<protein>
    <recommendedName>
        <fullName>Guanine nucleotide-binding protein G(i) subunit alpha-1</fullName>
        <ecNumber evidence="2">3.6.5.-</ecNumber>
    </recommendedName>
    <alternativeName>
        <fullName>Adenylate cyclase-inhibiting G alpha protein</fullName>
    </alternativeName>
</protein>
<reference key="1">
    <citation type="journal article" date="1994" name="Gene">
        <title>Cloning of cDNAs coding for the G alpha i1 and G alpha i2 G-proteins from chick brain.</title>
        <authorList>
            <person name="Kilbourne E.J."/>
            <person name="Galper J.B."/>
        </authorList>
    </citation>
    <scope>NUCLEOTIDE SEQUENCE [MRNA]</scope>
</reference>
<evidence type="ECO:0000250" key="1">
    <source>
        <dbReference type="UniProtKB" id="P10824"/>
    </source>
</evidence>
<evidence type="ECO:0000250" key="2">
    <source>
        <dbReference type="UniProtKB" id="P63096"/>
    </source>
</evidence>
<evidence type="ECO:0000255" key="3">
    <source>
        <dbReference type="PROSITE-ProRule" id="PRU01230"/>
    </source>
</evidence>
<evidence type="ECO:0000305" key="4"/>
<name>GNAI1_CHICK</name>
<gene>
    <name type="primary">GNAI1</name>
</gene>
<keyword id="KW-0131">Cell cycle</keyword>
<keyword id="KW-0132">Cell division</keyword>
<keyword id="KW-1003">Cell membrane</keyword>
<keyword id="KW-0963">Cytoplasm</keyword>
<keyword id="KW-0206">Cytoskeleton</keyword>
<keyword id="KW-0342">GTP-binding</keyword>
<keyword id="KW-0378">Hydrolase</keyword>
<keyword id="KW-0449">Lipoprotein</keyword>
<keyword id="KW-0460">Magnesium</keyword>
<keyword id="KW-0472">Membrane</keyword>
<keyword id="KW-0479">Metal-binding</keyword>
<keyword id="KW-0498">Mitosis</keyword>
<keyword id="KW-0519">Myristate</keyword>
<keyword id="KW-0547">Nucleotide-binding</keyword>
<keyword id="KW-0539">Nucleus</keyword>
<keyword id="KW-0564">Palmitate</keyword>
<keyword id="KW-1185">Reference proteome</keyword>
<keyword id="KW-0807">Transducer</keyword>
<keyword id="KW-0813">Transport</keyword>
<organism>
    <name type="scientific">Gallus gallus</name>
    <name type="common">Chicken</name>
    <dbReference type="NCBI Taxonomy" id="9031"/>
    <lineage>
        <taxon>Eukaryota</taxon>
        <taxon>Metazoa</taxon>
        <taxon>Chordata</taxon>
        <taxon>Craniata</taxon>
        <taxon>Vertebrata</taxon>
        <taxon>Euteleostomi</taxon>
        <taxon>Archelosauria</taxon>
        <taxon>Archosauria</taxon>
        <taxon>Dinosauria</taxon>
        <taxon>Saurischia</taxon>
        <taxon>Theropoda</taxon>
        <taxon>Coelurosauria</taxon>
        <taxon>Aves</taxon>
        <taxon>Neognathae</taxon>
        <taxon>Galloanserae</taxon>
        <taxon>Galliformes</taxon>
        <taxon>Phasianidae</taxon>
        <taxon>Phasianinae</taxon>
        <taxon>Gallus</taxon>
    </lineage>
</organism>
<proteinExistence type="evidence at transcript level"/>
<sequence>MGCTLSAEDKAAVERSKMIDRNLREDGEKAAREVKLLLLGAGESGKSTIVKQMKIIHEAGYSEEECKQYKAVVYSNTIQSIIAIIRAMGRLKIDFGDPTRADDARQLFVLAGAAEEGFMTADVAGVIKRLWKDSGVQACFNRSREYQLNDSAAYYLNDLDRIAQTSYIPTQQDVLRTRVKTTGIVETHFTFKDLHFKMFDVGGQRSERKKWIHCFEGVTAIIFCVALSDYDLVLAEDEEMNRMHESMKLFDSICNNKWFTDTSIILFLNKKDLFEEKIKRSPLTICYPEYAGSNTYEEAAAYIQCQFEDLNKRKDTKEIYTHFTCATDTKNVQFVFDAVTDVIIKNNLKDCGLF</sequence>
<feature type="initiator methionine" description="Removed" evidence="2">
    <location>
        <position position="1"/>
    </location>
</feature>
<feature type="chain" id="PRO_0000203674" description="Guanine nucleotide-binding protein G(i) subunit alpha-1">
    <location>
        <begin position="2"/>
        <end position="354"/>
    </location>
</feature>
<feature type="domain" description="G-alpha" evidence="3">
    <location>
        <begin position="32"/>
        <end position="354"/>
    </location>
</feature>
<feature type="region of interest" description="G1 motif" evidence="3">
    <location>
        <begin position="35"/>
        <end position="48"/>
    </location>
</feature>
<feature type="region of interest" description="G2 motif" evidence="3">
    <location>
        <begin position="173"/>
        <end position="181"/>
    </location>
</feature>
<feature type="region of interest" description="G3 motif" evidence="3">
    <location>
        <begin position="196"/>
        <end position="205"/>
    </location>
</feature>
<feature type="region of interest" description="G4 motif" evidence="3">
    <location>
        <begin position="265"/>
        <end position="272"/>
    </location>
</feature>
<feature type="region of interest" description="G5 motif" evidence="3">
    <location>
        <begin position="324"/>
        <end position="329"/>
    </location>
</feature>
<feature type="binding site" evidence="1">
    <location>
        <begin position="43"/>
        <end position="48"/>
    </location>
    <ligand>
        <name>GTP</name>
        <dbReference type="ChEBI" id="CHEBI:37565"/>
    </ligand>
</feature>
<feature type="binding site" evidence="1">
    <location>
        <position position="47"/>
    </location>
    <ligand>
        <name>Mg(2+)</name>
        <dbReference type="ChEBI" id="CHEBI:18420"/>
    </ligand>
</feature>
<feature type="binding site" evidence="1">
    <location>
        <begin position="150"/>
        <end position="151"/>
    </location>
    <ligand>
        <name>GTP</name>
        <dbReference type="ChEBI" id="CHEBI:37565"/>
    </ligand>
</feature>
<feature type="binding site" evidence="1">
    <location>
        <begin position="175"/>
        <end position="178"/>
    </location>
    <ligand>
        <name>GTP</name>
        <dbReference type="ChEBI" id="CHEBI:37565"/>
    </ligand>
</feature>
<feature type="binding site" evidence="1">
    <location>
        <position position="181"/>
    </location>
    <ligand>
        <name>Mg(2+)</name>
        <dbReference type="ChEBI" id="CHEBI:18420"/>
    </ligand>
</feature>
<feature type="binding site" evidence="1">
    <location>
        <begin position="200"/>
        <end position="204"/>
    </location>
    <ligand>
        <name>GTP</name>
        <dbReference type="ChEBI" id="CHEBI:37565"/>
    </ligand>
</feature>
<feature type="binding site" evidence="1">
    <location>
        <begin position="269"/>
        <end position="272"/>
    </location>
    <ligand>
        <name>GTP</name>
        <dbReference type="ChEBI" id="CHEBI:37565"/>
    </ligand>
</feature>
<feature type="binding site" evidence="1">
    <location>
        <position position="326"/>
    </location>
    <ligand>
        <name>GTP</name>
        <dbReference type="ChEBI" id="CHEBI:37565"/>
    </ligand>
</feature>
<feature type="lipid moiety-binding region" description="N-myristoyl glycine" evidence="2">
    <location>
        <position position="2"/>
    </location>
</feature>
<feature type="lipid moiety-binding region" description="S-palmitoyl cysteine" evidence="1">
    <location>
        <position position="3"/>
    </location>
</feature>